<dbReference type="EMBL" id="X97043">
    <property type="protein sequence ID" value="CAA65757.1"/>
    <property type="molecule type" value="Genomic_DNA"/>
</dbReference>
<dbReference type="SMR" id="P95503"/>
<dbReference type="GO" id="GO:0009522">
    <property type="term" value="C:photosystem I"/>
    <property type="evidence" value="ECO:0007669"/>
    <property type="project" value="UniProtKB-KW"/>
</dbReference>
<dbReference type="GO" id="GO:0009523">
    <property type="term" value="C:photosystem II"/>
    <property type="evidence" value="ECO:0007669"/>
    <property type="project" value="UniProtKB-KW"/>
</dbReference>
<dbReference type="GO" id="GO:0031676">
    <property type="term" value="C:plasma membrane-derived thylakoid membrane"/>
    <property type="evidence" value="ECO:0007669"/>
    <property type="project" value="UniProtKB-SubCell"/>
</dbReference>
<dbReference type="GO" id="GO:0016168">
    <property type="term" value="F:chlorophyll binding"/>
    <property type="evidence" value="ECO:0007669"/>
    <property type="project" value="UniProtKB-KW"/>
</dbReference>
<dbReference type="GO" id="GO:0009767">
    <property type="term" value="P:photosynthetic electron transport chain"/>
    <property type="evidence" value="ECO:0007669"/>
    <property type="project" value="InterPro"/>
</dbReference>
<dbReference type="InterPro" id="IPR000932">
    <property type="entry name" value="PS_antenna-like"/>
</dbReference>
<dbReference type="InterPro" id="IPR036001">
    <property type="entry name" value="PS_II_antenna-like_sf"/>
</dbReference>
<dbReference type="NCBIfam" id="TIGR03041">
    <property type="entry name" value="PS_antenn_a_b"/>
    <property type="match status" value="1"/>
</dbReference>
<dbReference type="Pfam" id="PF00421">
    <property type="entry name" value="PSII"/>
    <property type="match status" value="1"/>
</dbReference>
<dbReference type="SUPFAM" id="SSF161077">
    <property type="entry name" value="Photosystem II antenna protein-like"/>
    <property type="match status" value="1"/>
</dbReference>
<comment type="function">
    <text evidence="1">The antenna complex functions as a light receptor, it captures and delivers excitation energy to photosystems II and I. The Prochlorales pcb genes are not related to higher plant LHCs.</text>
</comment>
<comment type="cofactor">
    <cofactor evidence="1">
        <name>chlorophyll a</name>
        <dbReference type="ChEBI" id="CHEBI:58416"/>
    </cofactor>
    <text evidence="1">Chlorophyll a.</text>
</comment>
<comment type="cofactor">
    <cofactor evidence="1">
        <name>chlorophyll b</name>
        <dbReference type="ChEBI" id="CHEBI:61721"/>
    </cofactor>
    <text evidence="1">Chlorophyll b.</text>
</comment>
<comment type="subunit">
    <text evidence="1">The antenna complex consists of chlorophylls (a and b) and chlorophyll a/b binding proteins.</text>
</comment>
<comment type="subcellular location">
    <subcellularLocation>
        <location evidence="1">Cellular thylakoid membrane</location>
        <topology evidence="1">Multi-pass membrane protein</topology>
    </subcellularLocation>
</comment>
<comment type="similarity">
    <text evidence="4">Belongs to the PsbB/PsbC family. IsiA/Pcb subfamily.</text>
</comment>
<proteinExistence type="evidence at protein level"/>
<gene>
    <name type="primary">pcbA</name>
</gene>
<organism>
    <name type="scientific">Prochlorothrix hollandica</name>
    <dbReference type="NCBI Taxonomy" id="1223"/>
    <lineage>
        <taxon>Bacteria</taxon>
        <taxon>Bacillati</taxon>
        <taxon>Cyanobacteriota</taxon>
        <taxon>Cyanophyceae</taxon>
        <taxon>Prochlorotrichales</taxon>
        <taxon>Prochlorotrichaceae</taxon>
        <taxon>Prochlorothrix</taxon>
    </lineage>
</organism>
<accession>P95503</accession>
<feature type="initiator methionine" description="Removed" evidence="3">
    <location>
        <position position="1"/>
    </location>
</feature>
<feature type="chain" id="PRO_0000077535" description="Chlorophyll a/b light-harvesting protein PcbA">
    <location>
        <begin position="2"/>
        <end position="350"/>
    </location>
</feature>
<feature type="transmembrane region" description="Helical" evidence="2">
    <location>
        <begin position="26"/>
        <end position="46"/>
    </location>
</feature>
<feature type="transmembrane region" description="Helical" evidence="2">
    <location>
        <begin position="62"/>
        <end position="82"/>
    </location>
</feature>
<feature type="transmembrane region" description="Helical" evidence="2">
    <location>
        <begin position="87"/>
        <end position="107"/>
    </location>
</feature>
<feature type="transmembrane region" description="Helical" evidence="2">
    <location>
        <begin position="214"/>
        <end position="234"/>
    </location>
</feature>
<feature type="transmembrane region" description="Helical" evidence="2">
    <location>
        <begin position="248"/>
        <end position="268"/>
    </location>
</feature>
<feature type="transmembrane region" description="Helical" evidence="2">
    <location>
        <begin position="309"/>
        <end position="329"/>
    </location>
</feature>
<feature type="sequence conflict" description="In Ref. 1; AA sequence." evidence="4" ref="1">
    <original>H</original>
    <variation>P</variation>
    <location>
        <position position="128"/>
    </location>
</feature>
<feature type="sequence conflict" description="In Ref. 1; AA sequence." evidence="4" ref="1">
    <original>KL</original>
    <variation>QA</variation>
    <location>
        <begin position="136"/>
        <end position="137"/>
    </location>
</feature>
<feature type="sequence conflict" description="In Ref. 1; AA sequence." evidence="4" ref="1">
    <original>SLSG</original>
    <variation>FDFK</variation>
    <location>
        <begin position="345"/>
        <end position="348"/>
    </location>
</feature>
<evidence type="ECO:0000250" key="1">
    <source>
        <dbReference type="UniProtKB" id="Q6Q972"/>
    </source>
</evidence>
<evidence type="ECO:0000255" key="2"/>
<evidence type="ECO:0000269" key="3">
    <source>
    </source>
</evidence>
<evidence type="ECO:0000305" key="4"/>
<sequence length="350" mass="38261">MATTATPEYGWWAGNSRFALQSGKWLSAHIAQYALITFWAGGITLFELARYNPDVSMGEQGLILIPHLATLGWGIGSGGQVVDTYPYFVIGVIHLVASAVFGAGALYHALKGPEDLSQSDFEFAKNFHFEWDDAAKLGNILGHHLLTLGYAALLFVIWLRFHGVYDSTIGEVRVVTNPGATILSVLFEYGWFTPDHNPYFVNNLEDLASGHAYIAVVLLAGGFWHINQAPFPWAQRLLASLFSPEGLLSASLAGLSMAGFAAAYFSAVNTLAYPVEFFGPPLELKFSVAPYFVDTIDLPNGAHTARAWLCNVHFFLAFFVLQGHLWHALRALGFDFKRIPQALGSLSGEA</sequence>
<reference key="1">
    <citation type="journal article" date="1996" name="Proc. Natl. Acad. Sci. U.S.A.">
        <title>Independent evolution of the prochlorophyte and green plant chlorophyll a/b light-harvesting proteins.</title>
        <authorList>
            <person name="La Roche J."/>
            <person name="van der Staay G.W.M."/>
            <person name="Partensky F."/>
            <person name="Ducret A."/>
            <person name="Aebersold R.R."/>
            <person name="Li R."/>
            <person name="Golden S.S."/>
            <person name="Hiller R.G."/>
            <person name="Wrench P.M."/>
            <person name="Larkum A.W.D."/>
            <person name="Green B.R."/>
        </authorList>
    </citation>
    <scope>NUCLEOTIDE SEQUENCE [GENOMIC DNA]</scope>
    <scope>PROTEIN SEQUENCE OF 2-10; 112-124; 126-137; 286-302 AND 342-348</scope>
</reference>
<reference key="2">
    <citation type="journal article" date="1998" name="Plant Mol. Biol.">
        <title>The 38 kDa chlorophyll a/b protein of the prokaryote Prochlorothrix hollandica is encoded by a divergent pcb gene.</title>
        <authorList>
            <person name="van der Staay G.W.M."/>
            <person name="Yurkova N."/>
            <person name="Green B.R."/>
        </authorList>
    </citation>
    <scope>NUCLEOTIDE SEQUENCE [GENOMIC DNA]</scope>
</reference>
<reference key="3">
    <citation type="book" date="1995" name="Photosynthesis from light to biosphere">
        <title>The Chl a/b antenna from prochlorophytes is related to the iron stress-induced Chl a antenna from cyanobacteria.</title>
        <editorList>
            <person name="Mathis P."/>
        </editorList>
        <authorList>
            <person name="van der Staay G.W.M."/>
            <person name="Ducret A."/>
            <person name="Aebersold R.R."/>
            <person name="Li R."/>
            <person name="Golden S.S."/>
            <person name="Hiller R.G."/>
            <person name="Wrench P.M."/>
            <person name="Larkum A.W.D."/>
            <person name="Green B.R."/>
        </authorList>
    </citation>
    <scope>NUCLEOTIDE SEQUENCE [GENOMIC DNA]</scope>
</reference>
<protein>
    <recommendedName>
        <fullName>Chlorophyll a/b light-harvesting protein PcbA</fullName>
    </recommendedName>
</protein>
<name>PCBA_PROHO</name>
<keyword id="KW-0148">Chlorophyll</keyword>
<keyword id="KW-0157">Chromophore</keyword>
<keyword id="KW-0903">Direct protein sequencing</keyword>
<keyword id="KW-0472">Membrane</keyword>
<keyword id="KW-0602">Photosynthesis</keyword>
<keyword id="KW-0603">Photosystem I</keyword>
<keyword id="KW-0604">Photosystem II</keyword>
<keyword id="KW-0793">Thylakoid</keyword>
<keyword id="KW-0812">Transmembrane</keyword>
<keyword id="KW-1133">Transmembrane helix</keyword>